<reference key="1">
    <citation type="journal article" date="2001" name="Proc. Natl. Acad. Sci. U.S.A.">
        <title>Complete genome sequence of an M1 strain of Streptococcus pyogenes.</title>
        <authorList>
            <person name="Ferretti J.J."/>
            <person name="McShan W.M."/>
            <person name="Ajdic D.J."/>
            <person name="Savic D.J."/>
            <person name="Savic G."/>
            <person name="Lyon K."/>
            <person name="Primeaux C."/>
            <person name="Sezate S."/>
            <person name="Suvorov A.N."/>
            <person name="Kenton S."/>
            <person name="Lai H.S."/>
            <person name="Lin S.P."/>
            <person name="Qian Y."/>
            <person name="Jia H.G."/>
            <person name="Najar F.Z."/>
            <person name="Ren Q."/>
            <person name="Zhu H."/>
            <person name="Song L."/>
            <person name="White J."/>
            <person name="Yuan X."/>
            <person name="Clifton S.W."/>
            <person name="Roe B.A."/>
            <person name="McLaughlin R.E."/>
        </authorList>
    </citation>
    <scope>NUCLEOTIDE SEQUENCE [LARGE SCALE GENOMIC DNA]</scope>
    <source>
        <strain>ATCC 700294 / SF370 / Serotype M1</strain>
    </source>
</reference>
<reference key="2">
    <citation type="journal article" date="2005" name="J. Infect. Dis.">
        <title>Evolutionary origin and emergence of a highly successful clone of serotype M1 group A Streptococcus involved multiple horizontal gene transfer events.</title>
        <authorList>
            <person name="Sumby P."/>
            <person name="Porcella S.F."/>
            <person name="Madrigal A.G."/>
            <person name="Barbian K.D."/>
            <person name="Virtaneva K."/>
            <person name="Ricklefs S.M."/>
            <person name="Sturdevant D.E."/>
            <person name="Graham M.R."/>
            <person name="Vuopio-Varkila J."/>
            <person name="Hoe N.P."/>
            <person name="Musser J.M."/>
        </authorList>
    </citation>
    <scope>NUCLEOTIDE SEQUENCE [LARGE SCALE GENOMIC DNA]</scope>
    <source>
        <strain>ATCC BAA-947 / MGAS5005 / Serotype M1</strain>
    </source>
</reference>
<protein>
    <recommendedName>
        <fullName evidence="1">Formate--tetrahydrofolate ligase 1</fullName>
        <ecNumber evidence="1">6.3.4.3</ecNumber>
    </recommendedName>
    <alternativeName>
        <fullName evidence="1">Formyltetrahydrofolate synthetase 1</fullName>
        <shortName evidence="1">FHS 1</shortName>
        <shortName evidence="1">FTHFS 1</shortName>
    </alternativeName>
</protein>
<feature type="chain" id="PRO_0000199389" description="Formate--tetrahydrofolate ligase 1">
    <location>
        <begin position="1"/>
        <end position="556"/>
    </location>
</feature>
<feature type="binding site" evidence="1">
    <location>
        <begin position="65"/>
        <end position="72"/>
    </location>
    <ligand>
        <name>ATP</name>
        <dbReference type="ChEBI" id="CHEBI:30616"/>
    </ligand>
</feature>
<evidence type="ECO:0000255" key="1">
    <source>
        <dbReference type="HAMAP-Rule" id="MF_01543"/>
    </source>
</evidence>
<sequence>MKSDIEIAQSVALQPITDIVKKVGIDGDDIELYGKYKAKLSFEKMKAVEANEPGKLILVTAINPTPAGEGKSTMSIGLADALNQMGKKTMLALREPSLGPVMGIKGGAAGGGYAQVLPMEDINLHFTGDMHAITTANNALSALIDNHLQQGNDLGIDPRRIIWKRVLDLNDRALRQVIVGLGSPVNGVPREDGFDITVASEIMAILCLATDLKDLKKRLADIVVAYTYDRKPVYVRDLKVEGALTLILKDAIKPNLVQTIYGTPALIHGGPFANIAHGCNSVLATSTALRLADYTVTEAGFGADLGAEKFLNIKVPNLPKAPDAIVIVATLRALKMHGGVAKSDLAAENCEAVRLGFANLKRHVENMRQFKVPVVVAINEFVADTEAEIATLKALCEEIKVPVELASVWANGAEGGLALAKTVVRVIDQEAADYKRLYSDEDTLEEKVINIVTQIYGGKAVQFGPKAKTQLKQFAEFGWDKLPVCMAKTQYSFSDNPSLLGAPTDFDITIREFVPKTGAGFIVGLTGDVMTMPGLPKVPAAMAMDVAENGTALGLF</sequence>
<accession>Q99ZI9</accession>
<accession>Q48YM7</accession>
<dbReference type="EC" id="6.3.4.3" evidence="1"/>
<dbReference type="EMBL" id="AE004092">
    <property type="protein sequence ID" value="AAK34072.1"/>
    <property type="molecule type" value="Genomic_DNA"/>
</dbReference>
<dbReference type="EMBL" id="CP000017">
    <property type="protein sequence ID" value="AAZ51545.1"/>
    <property type="molecule type" value="Genomic_DNA"/>
</dbReference>
<dbReference type="RefSeq" id="NP_269351.1">
    <property type="nucleotide sequence ID" value="NC_002737.2"/>
</dbReference>
<dbReference type="SMR" id="Q99ZI9"/>
<dbReference type="PaxDb" id="1314-HKU360_00972"/>
<dbReference type="KEGG" id="spy:SPy_1213"/>
<dbReference type="KEGG" id="spz:M5005_Spy0927"/>
<dbReference type="PATRIC" id="fig|160490.10.peg.1059"/>
<dbReference type="HOGENOM" id="CLU_003601_3_3_9"/>
<dbReference type="OMA" id="KFWNLKC"/>
<dbReference type="UniPathway" id="UPA00193"/>
<dbReference type="Proteomes" id="UP000000750">
    <property type="component" value="Chromosome"/>
</dbReference>
<dbReference type="GO" id="GO:0005524">
    <property type="term" value="F:ATP binding"/>
    <property type="evidence" value="ECO:0007669"/>
    <property type="project" value="UniProtKB-UniRule"/>
</dbReference>
<dbReference type="GO" id="GO:0004329">
    <property type="term" value="F:formate-tetrahydrofolate ligase activity"/>
    <property type="evidence" value="ECO:0007669"/>
    <property type="project" value="UniProtKB-UniRule"/>
</dbReference>
<dbReference type="GO" id="GO:0035999">
    <property type="term" value="P:tetrahydrofolate interconversion"/>
    <property type="evidence" value="ECO:0007669"/>
    <property type="project" value="UniProtKB-UniRule"/>
</dbReference>
<dbReference type="CDD" id="cd00477">
    <property type="entry name" value="FTHFS"/>
    <property type="match status" value="1"/>
</dbReference>
<dbReference type="FunFam" id="3.30.1510.10:FF:000001">
    <property type="entry name" value="Formate--tetrahydrofolate ligase"/>
    <property type="match status" value="1"/>
</dbReference>
<dbReference type="FunFam" id="3.10.410.10:FF:000001">
    <property type="entry name" value="Putative formate--tetrahydrofolate ligase"/>
    <property type="match status" value="1"/>
</dbReference>
<dbReference type="Gene3D" id="3.30.1510.10">
    <property type="entry name" value="Domain 2, N(10)-formyltetrahydrofolate synthetase"/>
    <property type="match status" value="1"/>
</dbReference>
<dbReference type="Gene3D" id="3.10.410.10">
    <property type="entry name" value="Formyltetrahydrofolate synthetase, domain 3"/>
    <property type="match status" value="1"/>
</dbReference>
<dbReference type="Gene3D" id="3.40.50.300">
    <property type="entry name" value="P-loop containing nucleotide triphosphate hydrolases"/>
    <property type="match status" value="1"/>
</dbReference>
<dbReference type="HAMAP" id="MF_01543">
    <property type="entry name" value="FTHFS"/>
    <property type="match status" value="1"/>
</dbReference>
<dbReference type="InterPro" id="IPR000559">
    <property type="entry name" value="Formate_THF_ligase"/>
</dbReference>
<dbReference type="InterPro" id="IPR020628">
    <property type="entry name" value="Formate_THF_ligase_CS"/>
</dbReference>
<dbReference type="InterPro" id="IPR027417">
    <property type="entry name" value="P-loop_NTPase"/>
</dbReference>
<dbReference type="NCBIfam" id="NF010030">
    <property type="entry name" value="PRK13505.1"/>
    <property type="match status" value="1"/>
</dbReference>
<dbReference type="Pfam" id="PF01268">
    <property type="entry name" value="FTHFS"/>
    <property type="match status" value="1"/>
</dbReference>
<dbReference type="SUPFAM" id="SSF52540">
    <property type="entry name" value="P-loop containing nucleoside triphosphate hydrolases"/>
    <property type="match status" value="1"/>
</dbReference>
<dbReference type="PROSITE" id="PS00721">
    <property type="entry name" value="FTHFS_1"/>
    <property type="match status" value="1"/>
</dbReference>
<dbReference type="PROSITE" id="PS00722">
    <property type="entry name" value="FTHFS_2"/>
    <property type="match status" value="1"/>
</dbReference>
<organism>
    <name type="scientific">Streptococcus pyogenes serotype M1</name>
    <dbReference type="NCBI Taxonomy" id="301447"/>
    <lineage>
        <taxon>Bacteria</taxon>
        <taxon>Bacillati</taxon>
        <taxon>Bacillota</taxon>
        <taxon>Bacilli</taxon>
        <taxon>Lactobacillales</taxon>
        <taxon>Streptococcaceae</taxon>
        <taxon>Streptococcus</taxon>
    </lineage>
</organism>
<comment type="catalytic activity">
    <reaction evidence="1">
        <text>(6S)-5,6,7,8-tetrahydrofolate + formate + ATP = (6R)-10-formyltetrahydrofolate + ADP + phosphate</text>
        <dbReference type="Rhea" id="RHEA:20221"/>
        <dbReference type="ChEBI" id="CHEBI:15740"/>
        <dbReference type="ChEBI" id="CHEBI:30616"/>
        <dbReference type="ChEBI" id="CHEBI:43474"/>
        <dbReference type="ChEBI" id="CHEBI:57453"/>
        <dbReference type="ChEBI" id="CHEBI:195366"/>
        <dbReference type="ChEBI" id="CHEBI:456216"/>
        <dbReference type="EC" id="6.3.4.3"/>
    </reaction>
</comment>
<comment type="pathway">
    <text evidence="1">One-carbon metabolism; tetrahydrofolate interconversion.</text>
</comment>
<comment type="similarity">
    <text evidence="1">Belongs to the formate--tetrahydrofolate ligase family.</text>
</comment>
<gene>
    <name evidence="1" type="primary">fhs1</name>
    <name type="synonym">fhs</name>
    <name type="synonym">fhs.1</name>
    <name type="ordered locus">SPy_1213</name>
    <name type="ordered locus">M5005_Spy0927</name>
</gene>
<keyword id="KW-0067">ATP-binding</keyword>
<keyword id="KW-0436">Ligase</keyword>
<keyword id="KW-0547">Nucleotide-binding</keyword>
<keyword id="KW-0554">One-carbon metabolism</keyword>
<keyword id="KW-1185">Reference proteome</keyword>
<name>FTHS1_STRP1</name>
<proteinExistence type="inferred from homology"/>